<gene>
    <name evidence="1" type="primary">rplU</name>
    <name type="ordered locus">Helmi_26150</name>
    <name type="ORF">HM1_2711</name>
</gene>
<name>RL21_HELMI</name>
<comment type="function">
    <text evidence="1">This protein binds to 23S rRNA in the presence of protein L20.</text>
</comment>
<comment type="subunit">
    <text evidence="1">Part of the 50S ribosomal subunit. Contacts protein L20.</text>
</comment>
<comment type="similarity">
    <text evidence="1">Belongs to the bacterial ribosomal protein bL21 family.</text>
</comment>
<reference key="1">
    <citation type="journal article" date="2008" name="J. Bacteriol.">
        <title>The genome of Heliobacterium modesticaldum, a phototrophic representative of the Firmicutes containing the simplest photosynthetic apparatus.</title>
        <authorList>
            <person name="Sattley W.M."/>
            <person name="Madigan M.T."/>
            <person name="Swingley W.D."/>
            <person name="Cheung P.C."/>
            <person name="Clocksin K.M."/>
            <person name="Conrad A.L."/>
            <person name="Dejesa L.C."/>
            <person name="Honchak B.M."/>
            <person name="Jung D.O."/>
            <person name="Karbach L.E."/>
            <person name="Kurdoglu A."/>
            <person name="Lahiri S."/>
            <person name="Mastrian S.D."/>
            <person name="Page L.E."/>
            <person name="Taylor H.L."/>
            <person name="Wang Z.T."/>
            <person name="Raymond J."/>
            <person name="Chen M."/>
            <person name="Blankenship R.E."/>
            <person name="Touchman J.W."/>
        </authorList>
    </citation>
    <scope>NUCLEOTIDE SEQUENCE [LARGE SCALE GENOMIC DNA]</scope>
    <source>
        <strain>ATCC 51547 / Ice1</strain>
    </source>
</reference>
<protein>
    <recommendedName>
        <fullName evidence="1">Large ribosomal subunit protein bL21</fullName>
    </recommendedName>
    <alternativeName>
        <fullName evidence="2">50S ribosomal protein L21</fullName>
    </alternativeName>
</protein>
<organism>
    <name type="scientific">Heliobacterium modesticaldum (strain ATCC 51547 / Ice1)</name>
    <dbReference type="NCBI Taxonomy" id="498761"/>
    <lineage>
        <taxon>Bacteria</taxon>
        <taxon>Bacillati</taxon>
        <taxon>Bacillota</taxon>
        <taxon>Clostridia</taxon>
        <taxon>Eubacteriales</taxon>
        <taxon>Heliobacteriaceae</taxon>
        <taxon>Heliomicrobium</taxon>
    </lineage>
</organism>
<keyword id="KW-1185">Reference proteome</keyword>
<keyword id="KW-0687">Ribonucleoprotein</keyword>
<keyword id="KW-0689">Ribosomal protein</keyword>
<keyword id="KW-0694">RNA-binding</keyword>
<keyword id="KW-0699">rRNA-binding</keyword>
<accession>B0TBW7</accession>
<evidence type="ECO:0000255" key="1">
    <source>
        <dbReference type="HAMAP-Rule" id="MF_01363"/>
    </source>
</evidence>
<evidence type="ECO:0000305" key="2"/>
<feature type="chain" id="PRO_1000143805" description="Large ribosomal subunit protein bL21">
    <location>
        <begin position="1"/>
        <end position="103"/>
    </location>
</feature>
<dbReference type="EMBL" id="CP000930">
    <property type="protein sequence ID" value="ABZ85240.1"/>
    <property type="molecule type" value="Genomic_DNA"/>
</dbReference>
<dbReference type="RefSeq" id="WP_012283724.1">
    <property type="nucleotide sequence ID" value="NC_010337.2"/>
</dbReference>
<dbReference type="SMR" id="B0TBW7"/>
<dbReference type="STRING" id="498761.HM1_2711"/>
<dbReference type="KEGG" id="hmo:HM1_2711"/>
<dbReference type="eggNOG" id="COG0261">
    <property type="taxonomic scope" value="Bacteria"/>
</dbReference>
<dbReference type="HOGENOM" id="CLU_061463_3_2_9"/>
<dbReference type="OrthoDB" id="9813334at2"/>
<dbReference type="Proteomes" id="UP000008550">
    <property type="component" value="Chromosome"/>
</dbReference>
<dbReference type="GO" id="GO:0005737">
    <property type="term" value="C:cytoplasm"/>
    <property type="evidence" value="ECO:0007669"/>
    <property type="project" value="UniProtKB-ARBA"/>
</dbReference>
<dbReference type="GO" id="GO:1990904">
    <property type="term" value="C:ribonucleoprotein complex"/>
    <property type="evidence" value="ECO:0007669"/>
    <property type="project" value="UniProtKB-KW"/>
</dbReference>
<dbReference type="GO" id="GO:0005840">
    <property type="term" value="C:ribosome"/>
    <property type="evidence" value="ECO:0007669"/>
    <property type="project" value="UniProtKB-KW"/>
</dbReference>
<dbReference type="GO" id="GO:0019843">
    <property type="term" value="F:rRNA binding"/>
    <property type="evidence" value="ECO:0007669"/>
    <property type="project" value="UniProtKB-UniRule"/>
</dbReference>
<dbReference type="GO" id="GO:0003735">
    <property type="term" value="F:structural constituent of ribosome"/>
    <property type="evidence" value="ECO:0007669"/>
    <property type="project" value="InterPro"/>
</dbReference>
<dbReference type="GO" id="GO:0006412">
    <property type="term" value="P:translation"/>
    <property type="evidence" value="ECO:0007669"/>
    <property type="project" value="UniProtKB-UniRule"/>
</dbReference>
<dbReference type="HAMAP" id="MF_01363">
    <property type="entry name" value="Ribosomal_bL21"/>
    <property type="match status" value="1"/>
</dbReference>
<dbReference type="InterPro" id="IPR028909">
    <property type="entry name" value="bL21-like"/>
</dbReference>
<dbReference type="InterPro" id="IPR036164">
    <property type="entry name" value="bL21-like_sf"/>
</dbReference>
<dbReference type="InterPro" id="IPR001787">
    <property type="entry name" value="Ribosomal_bL21"/>
</dbReference>
<dbReference type="InterPro" id="IPR018258">
    <property type="entry name" value="Ribosomal_bL21_CS"/>
</dbReference>
<dbReference type="NCBIfam" id="TIGR00061">
    <property type="entry name" value="L21"/>
    <property type="match status" value="1"/>
</dbReference>
<dbReference type="PANTHER" id="PTHR21349">
    <property type="entry name" value="50S RIBOSOMAL PROTEIN L21"/>
    <property type="match status" value="1"/>
</dbReference>
<dbReference type="PANTHER" id="PTHR21349:SF0">
    <property type="entry name" value="LARGE RIBOSOMAL SUBUNIT PROTEIN BL21M"/>
    <property type="match status" value="1"/>
</dbReference>
<dbReference type="Pfam" id="PF00829">
    <property type="entry name" value="Ribosomal_L21p"/>
    <property type="match status" value="1"/>
</dbReference>
<dbReference type="SUPFAM" id="SSF141091">
    <property type="entry name" value="L21p-like"/>
    <property type="match status" value="1"/>
</dbReference>
<dbReference type="PROSITE" id="PS01169">
    <property type="entry name" value="RIBOSOMAL_L21"/>
    <property type="match status" value="1"/>
</dbReference>
<proteinExistence type="inferred from homology"/>
<sequence length="103" mass="11534">MFAIIETGGKQYKVQQGDVLKVEKLEANPGDVVEIDRVFAVSKDGELKVGAPTVEGAKVLLKVEDHGKGKKIIIFKYKPKKNYRRKQGHRQAFTQVRVEAIQA</sequence>